<sequence length="232" mass="25334">MGILKSLFTLGKSFISQAEESIEETQGVRMLEQHIRDAKAELDKAGKSRVDLLARVKLSHDKLKDLRERKASLEARALEALSKNVNPSLINEVAEEIARLENLITAEEQVLSNLEVSRDGVEKAVTATAQRIAQFEQQMEVVKATEAMQRAQQAVTTSTVGASSSVSTAAESLKRLQTRQAERQARLDAAAQLEKVADGRDLDEKLAEAGIGGSNKSSAQDVLARLQRQQGE</sequence>
<reference key="1">
    <citation type="journal article" date="2002" name="Proc. Natl. Acad. Sci. U.S.A.">
        <title>Extensive mosaic structure revealed by the complete genome sequence of uropathogenic Escherichia coli.</title>
        <authorList>
            <person name="Welch R.A."/>
            <person name="Burland V."/>
            <person name="Plunkett G. III"/>
            <person name="Redford P."/>
            <person name="Roesch P."/>
            <person name="Rasko D."/>
            <person name="Buckles E.L."/>
            <person name="Liou S.-R."/>
            <person name="Boutin A."/>
            <person name="Hackett J."/>
            <person name="Stroud D."/>
            <person name="Mayhew G.F."/>
            <person name="Rose D.J."/>
            <person name="Zhou S."/>
            <person name="Schwartz D.C."/>
            <person name="Perna N.T."/>
            <person name="Mobley H.L.T."/>
            <person name="Donnenberg M.S."/>
            <person name="Blattner F.R."/>
        </authorList>
    </citation>
    <scope>NUCLEOTIDE SEQUENCE [LARGE SCALE GENOMIC DNA]</scope>
    <source>
        <strain>CFT073 / ATCC 700928 / UPEC</strain>
    </source>
</reference>
<dbReference type="EMBL" id="AE014075">
    <property type="protein sequence ID" value="AAN83688.1"/>
    <property type="molecule type" value="Genomic_DNA"/>
</dbReference>
<dbReference type="RefSeq" id="WP_000511955.1">
    <property type="nucleotide sequence ID" value="NZ_CP051263.1"/>
</dbReference>
<dbReference type="SMR" id="P0AF79"/>
<dbReference type="STRING" id="199310.c5266"/>
<dbReference type="KEGG" id="ecc:c5266"/>
<dbReference type="eggNOG" id="COG1842">
    <property type="taxonomic scope" value="Bacteria"/>
</dbReference>
<dbReference type="HOGENOM" id="CLU_102201_0_1_6"/>
<dbReference type="BioCyc" id="ECOL199310:C5266-MONOMER"/>
<dbReference type="Proteomes" id="UP000001410">
    <property type="component" value="Chromosome"/>
</dbReference>
<dbReference type="InterPro" id="IPR007157">
    <property type="entry name" value="PspA_VIPP1"/>
</dbReference>
<dbReference type="PANTHER" id="PTHR31088">
    <property type="entry name" value="MEMBRANE-ASSOCIATED PROTEIN VIPP1, CHLOROPLASTIC"/>
    <property type="match status" value="1"/>
</dbReference>
<dbReference type="PANTHER" id="PTHR31088:SF9">
    <property type="entry name" value="PHAGE SHOCK PROTEIN A"/>
    <property type="match status" value="1"/>
</dbReference>
<dbReference type="Pfam" id="PF04012">
    <property type="entry name" value="PspA_IM30"/>
    <property type="match status" value="1"/>
</dbReference>
<gene>
    <name type="primary">yjfJ</name>
    <name type="ordered locus">c5266</name>
</gene>
<keyword id="KW-1185">Reference proteome</keyword>
<keyword id="KW-0732">Signal</keyword>
<evidence type="ECO:0000255" key="1"/>
<evidence type="ECO:0000256" key="2">
    <source>
        <dbReference type="SAM" id="MobiDB-lite"/>
    </source>
</evidence>
<evidence type="ECO:0000305" key="3"/>
<name>YJFJ_ECOL6</name>
<protein>
    <recommendedName>
        <fullName>Uncharacterized protein YjfJ</fullName>
    </recommendedName>
</protein>
<comment type="similarity">
    <text evidence="3">Belongs to the PspA/Vipp/IM30 family.</text>
</comment>
<accession>P0AF79</accession>
<accession>P39292</accession>
<proteinExistence type="inferred from homology"/>
<organism>
    <name type="scientific">Escherichia coli O6:H1 (strain CFT073 / ATCC 700928 / UPEC)</name>
    <dbReference type="NCBI Taxonomy" id="199310"/>
    <lineage>
        <taxon>Bacteria</taxon>
        <taxon>Pseudomonadati</taxon>
        <taxon>Pseudomonadota</taxon>
        <taxon>Gammaproteobacteria</taxon>
        <taxon>Enterobacterales</taxon>
        <taxon>Enterobacteriaceae</taxon>
        <taxon>Escherichia</taxon>
    </lineage>
</organism>
<feature type="signal peptide" evidence="1">
    <location>
        <begin position="1"/>
        <end position="18"/>
    </location>
</feature>
<feature type="chain" id="PRO_0000044590" description="Uncharacterized protein YjfJ">
    <location>
        <begin position="19"/>
        <end position="232"/>
    </location>
</feature>
<feature type="region of interest" description="Disordered" evidence="2">
    <location>
        <begin position="207"/>
        <end position="232"/>
    </location>
</feature>